<name>PROA_SACEN</name>
<organism>
    <name type="scientific">Saccharopolyspora erythraea (strain ATCC 11635 / DSM 40517 / JCM 4748 / NBRC 13426 / NCIMB 8594 / NRRL 2338)</name>
    <dbReference type="NCBI Taxonomy" id="405948"/>
    <lineage>
        <taxon>Bacteria</taxon>
        <taxon>Bacillati</taxon>
        <taxon>Actinomycetota</taxon>
        <taxon>Actinomycetes</taxon>
        <taxon>Pseudonocardiales</taxon>
        <taxon>Pseudonocardiaceae</taxon>
        <taxon>Saccharopolyspora</taxon>
    </lineage>
</organism>
<feature type="chain" id="PRO_0000340911" description="Gamma-glutamyl phosphate reductase">
    <location>
        <begin position="1"/>
        <end position="445"/>
    </location>
</feature>
<protein>
    <recommendedName>
        <fullName evidence="1">Gamma-glutamyl phosphate reductase</fullName>
        <shortName evidence="1">GPR</shortName>
        <ecNumber evidence="1">1.2.1.41</ecNumber>
    </recommendedName>
    <alternativeName>
        <fullName evidence="1">Glutamate-5-semialdehyde dehydrogenase</fullName>
    </alternativeName>
    <alternativeName>
        <fullName evidence="1">Glutamyl-gamma-semialdehyde dehydrogenase</fullName>
        <shortName evidence="1">GSA dehydrogenase</shortName>
    </alternativeName>
</protein>
<gene>
    <name evidence="1" type="primary">proA</name>
    <name type="ordered locus">SACE_1424</name>
</gene>
<keyword id="KW-0028">Amino-acid biosynthesis</keyword>
<keyword id="KW-0963">Cytoplasm</keyword>
<keyword id="KW-0521">NADP</keyword>
<keyword id="KW-0560">Oxidoreductase</keyword>
<keyword id="KW-0641">Proline biosynthesis</keyword>
<keyword id="KW-1185">Reference proteome</keyword>
<comment type="function">
    <text evidence="1">Catalyzes the NADPH-dependent reduction of L-glutamate 5-phosphate into L-glutamate 5-semialdehyde and phosphate. The product spontaneously undergoes cyclization to form 1-pyrroline-5-carboxylate.</text>
</comment>
<comment type="catalytic activity">
    <reaction evidence="1">
        <text>L-glutamate 5-semialdehyde + phosphate + NADP(+) = L-glutamyl 5-phosphate + NADPH + H(+)</text>
        <dbReference type="Rhea" id="RHEA:19541"/>
        <dbReference type="ChEBI" id="CHEBI:15378"/>
        <dbReference type="ChEBI" id="CHEBI:43474"/>
        <dbReference type="ChEBI" id="CHEBI:57783"/>
        <dbReference type="ChEBI" id="CHEBI:58066"/>
        <dbReference type="ChEBI" id="CHEBI:58274"/>
        <dbReference type="ChEBI" id="CHEBI:58349"/>
        <dbReference type="EC" id="1.2.1.41"/>
    </reaction>
</comment>
<comment type="pathway">
    <text evidence="1">Amino-acid biosynthesis; L-proline biosynthesis; L-glutamate 5-semialdehyde from L-glutamate: step 2/2.</text>
</comment>
<comment type="subcellular location">
    <subcellularLocation>
        <location evidence="1">Cytoplasm</location>
    </subcellularLocation>
</comment>
<comment type="similarity">
    <text evidence="1">Belongs to the gamma-glutamyl phosphate reductase family.</text>
</comment>
<dbReference type="EC" id="1.2.1.41" evidence="1"/>
<dbReference type="EMBL" id="AM420293">
    <property type="protein sequence ID" value="CAM00746.1"/>
    <property type="molecule type" value="Genomic_DNA"/>
</dbReference>
<dbReference type="RefSeq" id="WP_009947736.1">
    <property type="nucleotide sequence ID" value="NC_009142.1"/>
</dbReference>
<dbReference type="SMR" id="A4F9M1"/>
<dbReference type="STRING" id="405948.SACE_1424"/>
<dbReference type="KEGG" id="sen:SACE_1424"/>
<dbReference type="eggNOG" id="COG0014">
    <property type="taxonomic scope" value="Bacteria"/>
</dbReference>
<dbReference type="HOGENOM" id="CLU_030231_0_0_11"/>
<dbReference type="OrthoDB" id="9809970at2"/>
<dbReference type="UniPathway" id="UPA00098">
    <property type="reaction ID" value="UER00360"/>
</dbReference>
<dbReference type="Proteomes" id="UP000006728">
    <property type="component" value="Chromosome"/>
</dbReference>
<dbReference type="GO" id="GO:0005737">
    <property type="term" value="C:cytoplasm"/>
    <property type="evidence" value="ECO:0007669"/>
    <property type="project" value="UniProtKB-SubCell"/>
</dbReference>
<dbReference type="GO" id="GO:0004350">
    <property type="term" value="F:glutamate-5-semialdehyde dehydrogenase activity"/>
    <property type="evidence" value="ECO:0007669"/>
    <property type="project" value="UniProtKB-UniRule"/>
</dbReference>
<dbReference type="GO" id="GO:0050661">
    <property type="term" value="F:NADP binding"/>
    <property type="evidence" value="ECO:0007669"/>
    <property type="project" value="InterPro"/>
</dbReference>
<dbReference type="GO" id="GO:0055129">
    <property type="term" value="P:L-proline biosynthetic process"/>
    <property type="evidence" value="ECO:0007669"/>
    <property type="project" value="UniProtKB-UniRule"/>
</dbReference>
<dbReference type="CDD" id="cd07079">
    <property type="entry name" value="ALDH_F18-19_ProA-GPR"/>
    <property type="match status" value="1"/>
</dbReference>
<dbReference type="FunFam" id="3.40.309.10:FF:000006">
    <property type="entry name" value="Gamma-glutamyl phosphate reductase"/>
    <property type="match status" value="1"/>
</dbReference>
<dbReference type="Gene3D" id="3.40.605.10">
    <property type="entry name" value="Aldehyde Dehydrogenase, Chain A, domain 1"/>
    <property type="match status" value="1"/>
</dbReference>
<dbReference type="Gene3D" id="3.40.309.10">
    <property type="entry name" value="Aldehyde Dehydrogenase, Chain A, domain 2"/>
    <property type="match status" value="1"/>
</dbReference>
<dbReference type="HAMAP" id="MF_00412">
    <property type="entry name" value="ProA"/>
    <property type="match status" value="1"/>
</dbReference>
<dbReference type="InterPro" id="IPR016161">
    <property type="entry name" value="Ald_DH/histidinol_DH"/>
</dbReference>
<dbReference type="InterPro" id="IPR016163">
    <property type="entry name" value="Ald_DH_C"/>
</dbReference>
<dbReference type="InterPro" id="IPR016162">
    <property type="entry name" value="Ald_DH_N"/>
</dbReference>
<dbReference type="InterPro" id="IPR015590">
    <property type="entry name" value="Aldehyde_DH_dom"/>
</dbReference>
<dbReference type="InterPro" id="IPR020593">
    <property type="entry name" value="G-glutamylP_reductase_CS"/>
</dbReference>
<dbReference type="InterPro" id="IPR012134">
    <property type="entry name" value="Glu-5-SA_DH"/>
</dbReference>
<dbReference type="InterPro" id="IPR000965">
    <property type="entry name" value="GPR_dom"/>
</dbReference>
<dbReference type="NCBIfam" id="NF001221">
    <property type="entry name" value="PRK00197.1"/>
    <property type="match status" value="1"/>
</dbReference>
<dbReference type="NCBIfam" id="TIGR00407">
    <property type="entry name" value="proA"/>
    <property type="match status" value="1"/>
</dbReference>
<dbReference type="PANTHER" id="PTHR11063:SF8">
    <property type="entry name" value="DELTA-1-PYRROLINE-5-CARBOXYLATE SYNTHASE"/>
    <property type="match status" value="1"/>
</dbReference>
<dbReference type="PANTHER" id="PTHR11063">
    <property type="entry name" value="GLUTAMATE SEMIALDEHYDE DEHYDROGENASE"/>
    <property type="match status" value="1"/>
</dbReference>
<dbReference type="Pfam" id="PF00171">
    <property type="entry name" value="Aldedh"/>
    <property type="match status" value="1"/>
</dbReference>
<dbReference type="PIRSF" id="PIRSF000151">
    <property type="entry name" value="GPR"/>
    <property type="match status" value="1"/>
</dbReference>
<dbReference type="SUPFAM" id="SSF53720">
    <property type="entry name" value="ALDH-like"/>
    <property type="match status" value="1"/>
</dbReference>
<dbReference type="PROSITE" id="PS01223">
    <property type="entry name" value="PROA"/>
    <property type="match status" value="1"/>
</dbReference>
<accession>A4F9M1</accession>
<sequence length="445" mass="46244">MTTSTQAPSTKAQGEELREQVLAAARRAKQAAAELAVANRDTKDALLHDMADALVRRAPEIIAANDLDVAAGREAGLAEDMIDRLRLDDDRIAGMADGLRTVAGLPDPVGEVLRGQVLPNGLQLQQVRVPLGVVGIVYEGRPNVTVDAAGLTLKAGNAVLLRGSSSAERSNTVLVSILTDVVVEHGLPADSVQLLPCHDRASVRYLITARGLVDVVIPRGGAGLISAVVEQATVPAIETGVGNCHVYVDAKADVDTALRILLNSKARRVSVCNAAENLLVHQDIAAEFLPRALSELHSAGVTVHGDEQVVEAGGPNVVPATAEDWDTEYLSHDIAAAVVESLPAAVEHIRAHGSGHTEAIVTDDVRAARQFSAQVDAAAVMVNASTAFTDGGEFGMGAEIGISTQKLHARGPMGLPELTSTKWLAFGDGHVRGTGASGVNSCPAG</sequence>
<proteinExistence type="inferred from homology"/>
<evidence type="ECO:0000255" key="1">
    <source>
        <dbReference type="HAMAP-Rule" id="MF_00412"/>
    </source>
</evidence>
<reference key="1">
    <citation type="journal article" date="2007" name="Nat. Biotechnol.">
        <title>Complete genome sequence of the erythromycin-producing bacterium Saccharopolyspora erythraea NRRL23338.</title>
        <authorList>
            <person name="Oliynyk M."/>
            <person name="Samborskyy M."/>
            <person name="Lester J.B."/>
            <person name="Mironenko T."/>
            <person name="Scott N."/>
            <person name="Dickens S."/>
            <person name="Haydock S.F."/>
            <person name="Leadlay P.F."/>
        </authorList>
    </citation>
    <scope>NUCLEOTIDE SEQUENCE [LARGE SCALE GENOMIC DNA]</scope>
    <source>
        <strain>ATCC 11635 / DSM 40517 / JCM 4748 / NBRC 13426 / NCIMB 8594 / NRRL 2338</strain>
    </source>
</reference>